<gene>
    <name type="primary">nodF</name>
    <name type="synonym">hsnA</name>
</gene>
<sequence>MADQLTVEIIAAIKNLAQSENGGRIPAAIGDITADRQLTSLGIDSLALADVLWDLEQAYGIRIEMNTADAWSNLKNIGDVVEAVRGLIAKEA</sequence>
<feature type="chain" id="PRO_0000180260" description="Nodulation protein F">
    <location>
        <begin position="1"/>
        <end position="92"/>
    </location>
</feature>
<feature type="domain" description="Carrier" evidence="1">
    <location>
        <begin position="4"/>
        <end position="88"/>
    </location>
</feature>
<feature type="modified residue" description="O-(pantetheine 4'-phosphoryl)serine" evidence="1">
    <location>
        <position position="45"/>
    </location>
</feature>
<geneLocation type="plasmid">
    <name>sym pRtr843e</name>
</geneLocation>
<comment type="function">
    <text>Proposed to synthesize nod factor fatty acyl chain. Involved in trans-2,trans-4,trans-6,cis-11-octadecatetraenoic acid biosynthesis.</text>
</comment>
<comment type="PTM">
    <text evidence="2">4'-phosphopantetheine is transferred from CoA to a specific serine of apo-NodF.</text>
</comment>
<protein>
    <recommendedName>
        <fullName>Nodulation protein F</fullName>
    </recommendedName>
    <alternativeName>
        <fullName>Host-specificity of nodulation protein A</fullName>
    </alternativeName>
</protein>
<organism>
    <name type="scientific">Rhizobium leguminosarum bv. trifolii</name>
    <dbReference type="NCBI Taxonomy" id="386"/>
    <lineage>
        <taxon>Bacteria</taxon>
        <taxon>Pseudomonadati</taxon>
        <taxon>Pseudomonadota</taxon>
        <taxon>Alphaproteobacteria</taxon>
        <taxon>Hyphomicrobiales</taxon>
        <taxon>Rhizobiaceae</taxon>
        <taxon>Rhizobium/Agrobacterium group</taxon>
        <taxon>Rhizobium</taxon>
    </lineage>
</organism>
<name>NODF_RHILT</name>
<dbReference type="EMBL" id="X03721">
    <property type="protein sequence ID" value="CAA27355.1"/>
    <property type="molecule type" value="Genomic_DNA"/>
</dbReference>
<dbReference type="EMBL" id="X16620">
    <property type="protein sequence ID" value="CAA34616.2"/>
    <property type="molecule type" value="Genomic_DNA"/>
</dbReference>
<dbReference type="PIR" id="F23766">
    <property type="entry name" value="F23766"/>
</dbReference>
<dbReference type="SMR" id="P04686"/>
<dbReference type="Gene3D" id="1.10.1200.10">
    <property type="entry name" value="ACP-like"/>
    <property type="match status" value="1"/>
</dbReference>
<dbReference type="InterPro" id="IPR036736">
    <property type="entry name" value="ACP-like_sf"/>
</dbReference>
<dbReference type="InterPro" id="IPR009081">
    <property type="entry name" value="PP-bd_ACP"/>
</dbReference>
<dbReference type="InterPro" id="IPR006162">
    <property type="entry name" value="Ppantetheine_attach_site"/>
</dbReference>
<dbReference type="Pfam" id="PF00550">
    <property type="entry name" value="PP-binding"/>
    <property type="match status" value="1"/>
</dbReference>
<dbReference type="SUPFAM" id="SSF47336">
    <property type="entry name" value="ACP-like"/>
    <property type="match status" value="1"/>
</dbReference>
<dbReference type="PROSITE" id="PS50075">
    <property type="entry name" value="CARRIER"/>
    <property type="match status" value="1"/>
</dbReference>
<dbReference type="PROSITE" id="PS00012">
    <property type="entry name" value="PHOSPHOPANTETHEINE"/>
    <property type="match status" value="1"/>
</dbReference>
<reference key="1">
    <citation type="journal article" date="1986" name="Nucleic Acids Res.">
        <title>DNA sequence of Rhizobium trifolii nodulation genes reveals a reiterated and potentially regulatory sequence preceding nodABC and nodFE.</title>
        <authorList>
            <person name="Schofield P.R."/>
            <person name="Watson J.M."/>
        </authorList>
    </citation>
    <scope>NUCLEOTIDE SEQUENCE [GENOMIC DNA]</scope>
    <source>
        <strain>ANU 843</strain>
    </source>
</reference>
<reference key="2">
    <citation type="journal article" date="1989" name="EMBO J.">
        <title>Genetic analysis and cellular localization of the Rhizobium host specificity-determining NodE protein.</title>
        <authorList>
            <person name="Spaink H.P."/>
            <person name="Weinman J."/>
            <person name="Djordjevic M.A."/>
            <person name="Wijffelman C.A."/>
            <person name="Okker R.J.H."/>
            <person name="Lugtenberg B.J.J."/>
        </authorList>
    </citation>
    <scope>NUCLEOTIDE SEQUENCE [GENOMIC DNA] OF 43-92</scope>
    <source>
        <strain>ANU 843</strain>
    </source>
</reference>
<evidence type="ECO:0000255" key="1">
    <source>
        <dbReference type="PROSITE-ProRule" id="PRU00258"/>
    </source>
</evidence>
<evidence type="ECO:0000305" key="2"/>
<accession>P04686</accession>
<proteinExistence type="inferred from homology"/>
<keyword id="KW-0536">Nodulation</keyword>
<keyword id="KW-0596">Phosphopantetheine</keyword>
<keyword id="KW-0597">Phosphoprotein</keyword>
<keyword id="KW-0614">Plasmid</keyword>